<accession>B0JXF6</accession>
<comment type="function">
    <text evidence="1">Plays an important role in the de novo pathway of purine nucleotide biosynthesis. Catalyzes the first committed step in the biosynthesis of AMP from IMP.</text>
</comment>
<comment type="catalytic activity">
    <reaction evidence="1">
        <text>IMP + L-aspartate + GTP = N(6)-(1,2-dicarboxyethyl)-AMP + GDP + phosphate + 2 H(+)</text>
        <dbReference type="Rhea" id="RHEA:15753"/>
        <dbReference type="ChEBI" id="CHEBI:15378"/>
        <dbReference type="ChEBI" id="CHEBI:29991"/>
        <dbReference type="ChEBI" id="CHEBI:37565"/>
        <dbReference type="ChEBI" id="CHEBI:43474"/>
        <dbReference type="ChEBI" id="CHEBI:57567"/>
        <dbReference type="ChEBI" id="CHEBI:58053"/>
        <dbReference type="ChEBI" id="CHEBI:58189"/>
        <dbReference type="EC" id="6.3.4.4"/>
    </reaction>
</comment>
<comment type="cofactor">
    <cofactor evidence="1">
        <name>Mg(2+)</name>
        <dbReference type="ChEBI" id="CHEBI:18420"/>
    </cofactor>
    <text evidence="1">Binds 1 Mg(2+) ion per subunit.</text>
</comment>
<comment type="pathway">
    <text evidence="1">Purine metabolism; AMP biosynthesis via de novo pathway; AMP from IMP: step 1/2.</text>
</comment>
<comment type="subunit">
    <text evidence="1">Homodimer.</text>
</comment>
<comment type="subcellular location">
    <subcellularLocation>
        <location evidence="1">Cytoplasm</location>
    </subcellularLocation>
</comment>
<comment type="similarity">
    <text evidence="1">Belongs to the adenylosuccinate synthetase family.</text>
</comment>
<protein>
    <recommendedName>
        <fullName evidence="1">Adenylosuccinate synthetase</fullName>
        <shortName evidence="1">AMPSase</shortName>
        <shortName evidence="1">AdSS</shortName>
        <ecNumber evidence="1">6.3.4.4</ecNumber>
    </recommendedName>
    <alternativeName>
        <fullName evidence="1">IMP--aspartate ligase</fullName>
    </alternativeName>
</protein>
<sequence>MANVIVIGAQWGDEGKGKITDLLSRSADVVVRSQGGVNAGHTVVVEGQTFKLHLIPSGILYPDTECIIGSGTVIDPSVLLKEMAQLHALNVTTDNLYISQTAHVTMPYHRLLDQASEEKRGKYKIGTTGRGIGPTYADKSERIGIRVIDLINTENLRQKLEWTINYKNVILEKLYNLPPLDAKTVIEEYLEYAEILRPHVVDSSLKIYEAIRKRKNILFEGAQGTLLDLDHGTYPYVTSSNPIAGGACVGSGIGPTVIDRVIGVAKAYTTRVGEGPFPTELEGEIEQLLCDRGAEFGTTTGRRRRCGWFDAVIGRYAVRINGLDCLAITKLDVLDTLEEIKVCVAYQLDGQTCRHLPSSAGEFARCQPIYRTMPGWQQPTSDCRSLEDLPKQALDYLKFLGAIMEVPIAIISLGASRDQTIIVEDPIHGPKRALLDENGSPWDNHEF</sequence>
<feature type="chain" id="PRO_1000073951" description="Adenylosuccinate synthetase">
    <location>
        <begin position="1"/>
        <end position="447"/>
    </location>
</feature>
<feature type="active site" description="Proton acceptor" evidence="1">
    <location>
        <position position="13"/>
    </location>
</feature>
<feature type="active site" description="Proton donor" evidence="1">
    <location>
        <position position="41"/>
    </location>
</feature>
<feature type="binding site" evidence="1">
    <location>
        <begin position="12"/>
        <end position="18"/>
    </location>
    <ligand>
        <name>GTP</name>
        <dbReference type="ChEBI" id="CHEBI:37565"/>
    </ligand>
</feature>
<feature type="binding site" description="in other chain" evidence="1">
    <location>
        <begin position="13"/>
        <end position="16"/>
    </location>
    <ligand>
        <name>IMP</name>
        <dbReference type="ChEBI" id="CHEBI:58053"/>
        <note>ligand shared between dimeric partners</note>
    </ligand>
</feature>
<feature type="binding site" evidence="1">
    <location>
        <position position="13"/>
    </location>
    <ligand>
        <name>Mg(2+)</name>
        <dbReference type="ChEBI" id="CHEBI:18420"/>
    </ligand>
</feature>
<feature type="binding site" description="in other chain" evidence="1">
    <location>
        <begin position="38"/>
        <end position="41"/>
    </location>
    <ligand>
        <name>IMP</name>
        <dbReference type="ChEBI" id="CHEBI:58053"/>
        <note>ligand shared between dimeric partners</note>
    </ligand>
</feature>
<feature type="binding site" evidence="1">
    <location>
        <begin position="40"/>
        <end position="42"/>
    </location>
    <ligand>
        <name>GTP</name>
        <dbReference type="ChEBI" id="CHEBI:37565"/>
    </ligand>
</feature>
<feature type="binding site" evidence="1">
    <location>
        <position position="40"/>
    </location>
    <ligand>
        <name>Mg(2+)</name>
        <dbReference type="ChEBI" id="CHEBI:18420"/>
    </ligand>
</feature>
<feature type="binding site" description="in other chain" evidence="1">
    <location>
        <position position="128"/>
    </location>
    <ligand>
        <name>IMP</name>
        <dbReference type="ChEBI" id="CHEBI:58053"/>
        <note>ligand shared between dimeric partners</note>
    </ligand>
</feature>
<feature type="binding site" evidence="1">
    <location>
        <position position="142"/>
    </location>
    <ligand>
        <name>IMP</name>
        <dbReference type="ChEBI" id="CHEBI:58053"/>
        <note>ligand shared between dimeric partners</note>
    </ligand>
</feature>
<feature type="binding site" description="in other chain" evidence="1">
    <location>
        <position position="223"/>
    </location>
    <ligand>
        <name>IMP</name>
        <dbReference type="ChEBI" id="CHEBI:58053"/>
        <note>ligand shared between dimeric partners</note>
    </ligand>
</feature>
<feature type="binding site" description="in other chain" evidence="1">
    <location>
        <position position="238"/>
    </location>
    <ligand>
        <name>IMP</name>
        <dbReference type="ChEBI" id="CHEBI:58053"/>
        <note>ligand shared between dimeric partners</note>
    </ligand>
</feature>
<feature type="binding site" evidence="1">
    <location>
        <begin position="298"/>
        <end position="304"/>
    </location>
    <ligand>
        <name>substrate</name>
    </ligand>
</feature>
<feature type="binding site" description="in other chain" evidence="1">
    <location>
        <position position="302"/>
    </location>
    <ligand>
        <name>IMP</name>
        <dbReference type="ChEBI" id="CHEBI:58053"/>
        <note>ligand shared between dimeric partners</note>
    </ligand>
</feature>
<feature type="binding site" evidence="1">
    <location>
        <position position="304"/>
    </location>
    <ligand>
        <name>GTP</name>
        <dbReference type="ChEBI" id="CHEBI:37565"/>
    </ligand>
</feature>
<feature type="binding site" evidence="1">
    <location>
        <begin position="330"/>
        <end position="332"/>
    </location>
    <ligand>
        <name>GTP</name>
        <dbReference type="ChEBI" id="CHEBI:37565"/>
    </ligand>
</feature>
<feature type="binding site" evidence="1">
    <location>
        <begin position="412"/>
        <end position="414"/>
    </location>
    <ligand>
        <name>GTP</name>
        <dbReference type="ChEBI" id="CHEBI:37565"/>
    </ligand>
</feature>
<gene>
    <name evidence="1" type="primary">purA</name>
    <name type="ordered locus">MAE_19610</name>
</gene>
<organism>
    <name type="scientific">Microcystis aeruginosa (strain NIES-843 / IAM M-2473)</name>
    <dbReference type="NCBI Taxonomy" id="449447"/>
    <lineage>
        <taxon>Bacteria</taxon>
        <taxon>Bacillati</taxon>
        <taxon>Cyanobacteriota</taxon>
        <taxon>Cyanophyceae</taxon>
        <taxon>Oscillatoriophycideae</taxon>
        <taxon>Chroococcales</taxon>
        <taxon>Microcystaceae</taxon>
        <taxon>Microcystis</taxon>
    </lineage>
</organism>
<keyword id="KW-0963">Cytoplasm</keyword>
<keyword id="KW-0342">GTP-binding</keyword>
<keyword id="KW-0436">Ligase</keyword>
<keyword id="KW-0460">Magnesium</keyword>
<keyword id="KW-0479">Metal-binding</keyword>
<keyword id="KW-0547">Nucleotide-binding</keyword>
<keyword id="KW-0658">Purine biosynthesis</keyword>
<proteinExistence type="inferred from homology"/>
<name>PURA_MICAN</name>
<evidence type="ECO:0000255" key="1">
    <source>
        <dbReference type="HAMAP-Rule" id="MF_00011"/>
    </source>
</evidence>
<dbReference type="EC" id="6.3.4.4" evidence="1"/>
<dbReference type="EMBL" id="AP009552">
    <property type="protein sequence ID" value="BAG01783.1"/>
    <property type="molecule type" value="Genomic_DNA"/>
</dbReference>
<dbReference type="RefSeq" id="WP_002798371.1">
    <property type="nucleotide sequence ID" value="NC_010296.1"/>
</dbReference>
<dbReference type="SMR" id="B0JXF6"/>
<dbReference type="STRING" id="449447.MAE_19610"/>
<dbReference type="PaxDb" id="449447-MAE_19610"/>
<dbReference type="EnsemblBacteria" id="BAG01783">
    <property type="protein sequence ID" value="BAG01783"/>
    <property type="gene ID" value="MAE_19610"/>
</dbReference>
<dbReference type="KEGG" id="mar:MAE_19610"/>
<dbReference type="eggNOG" id="COG0104">
    <property type="taxonomic scope" value="Bacteria"/>
</dbReference>
<dbReference type="HOGENOM" id="CLU_029848_0_0_3"/>
<dbReference type="BioCyc" id="MAER449447:MAE_RS08580-MONOMER"/>
<dbReference type="UniPathway" id="UPA00075">
    <property type="reaction ID" value="UER00335"/>
</dbReference>
<dbReference type="Proteomes" id="UP000001510">
    <property type="component" value="Chromosome"/>
</dbReference>
<dbReference type="GO" id="GO:0005737">
    <property type="term" value="C:cytoplasm"/>
    <property type="evidence" value="ECO:0007669"/>
    <property type="project" value="UniProtKB-SubCell"/>
</dbReference>
<dbReference type="GO" id="GO:0004019">
    <property type="term" value="F:adenylosuccinate synthase activity"/>
    <property type="evidence" value="ECO:0007669"/>
    <property type="project" value="UniProtKB-UniRule"/>
</dbReference>
<dbReference type="GO" id="GO:0005525">
    <property type="term" value="F:GTP binding"/>
    <property type="evidence" value="ECO:0007669"/>
    <property type="project" value="UniProtKB-UniRule"/>
</dbReference>
<dbReference type="GO" id="GO:0000287">
    <property type="term" value="F:magnesium ion binding"/>
    <property type="evidence" value="ECO:0007669"/>
    <property type="project" value="UniProtKB-UniRule"/>
</dbReference>
<dbReference type="GO" id="GO:0044208">
    <property type="term" value="P:'de novo' AMP biosynthetic process"/>
    <property type="evidence" value="ECO:0007669"/>
    <property type="project" value="UniProtKB-UniRule"/>
</dbReference>
<dbReference type="GO" id="GO:0046040">
    <property type="term" value="P:IMP metabolic process"/>
    <property type="evidence" value="ECO:0007669"/>
    <property type="project" value="TreeGrafter"/>
</dbReference>
<dbReference type="CDD" id="cd03108">
    <property type="entry name" value="AdSS"/>
    <property type="match status" value="1"/>
</dbReference>
<dbReference type="FunFam" id="1.10.300.10:FF:000001">
    <property type="entry name" value="Adenylosuccinate synthetase"/>
    <property type="match status" value="1"/>
</dbReference>
<dbReference type="FunFam" id="3.90.170.10:FF:000001">
    <property type="entry name" value="Adenylosuccinate synthetase"/>
    <property type="match status" value="1"/>
</dbReference>
<dbReference type="Gene3D" id="3.40.440.10">
    <property type="entry name" value="Adenylosuccinate Synthetase, subunit A, domain 1"/>
    <property type="match status" value="1"/>
</dbReference>
<dbReference type="Gene3D" id="1.10.300.10">
    <property type="entry name" value="Adenylosuccinate Synthetase, subunit A, domain 2"/>
    <property type="match status" value="1"/>
</dbReference>
<dbReference type="Gene3D" id="3.90.170.10">
    <property type="entry name" value="Adenylosuccinate Synthetase, subunit A, domain 3"/>
    <property type="match status" value="1"/>
</dbReference>
<dbReference type="HAMAP" id="MF_00011">
    <property type="entry name" value="Adenylosucc_synth"/>
    <property type="match status" value="1"/>
</dbReference>
<dbReference type="InterPro" id="IPR018220">
    <property type="entry name" value="Adenylosuccin_syn_GTP-bd"/>
</dbReference>
<dbReference type="InterPro" id="IPR033128">
    <property type="entry name" value="Adenylosuccin_syn_Lys_AS"/>
</dbReference>
<dbReference type="InterPro" id="IPR042109">
    <property type="entry name" value="Adenylosuccinate_synth_dom1"/>
</dbReference>
<dbReference type="InterPro" id="IPR042110">
    <property type="entry name" value="Adenylosuccinate_synth_dom2"/>
</dbReference>
<dbReference type="InterPro" id="IPR042111">
    <property type="entry name" value="Adenylosuccinate_synth_dom3"/>
</dbReference>
<dbReference type="InterPro" id="IPR001114">
    <property type="entry name" value="Adenylosuccinate_synthetase"/>
</dbReference>
<dbReference type="InterPro" id="IPR027417">
    <property type="entry name" value="P-loop_NTPase"/>
</dbReference>
<dbReference type="NCBIfam" id="NF002223">
    <property type="entry name" value="PRK01117.1"/>
    <property type="match status" value="1"/>
</dbReference>
<dbReference type="NCBIfam" id="TIGR00184">
    <property type="entry name" value="purA"/>
    <property type="match status" value="1"/>
</dbReference>
<dbReference type="PANTHER" id="PTHR11846">
    <property type="entry name" value="ADENYLOSUCCINATE SYNTHETASE"/>
    <property type="match status" value="1"/>
</dbReference>
<dbReference type="PANTHER" id="PTHR11846:SF0">
    <property type="entry name" value="ADENYLOSUCCINATE SYNTHETASE"/>
    <property type="match status" value="1"/>
</dbReference>
<dbReference type="Pfam" id="PF00709">
    <property type="entry name" value="Adenylsucc_synt"/>
    <property type="match status" value="1"/>
</dbReference>
<dbReference type="SMART" id="SM00788">
    <property type="entry name" value="Adenylsucc_synt"/>
    <property type="match status" value="1"/>
</dbReference>
<dbReference type="SUPFAM" id="SSF52540">
    <property type="entry name" value="P-loop containing nucleoside triphosphate hydrolases"/>
    <property type="match status" value="1"/>
</dbReference>
<dbReference type="PROSITE" id="PS01266">
    <property type="entry name" value="ADENYLOSUCCIN_SYN_1"/>
    <property type="match status" value="1"/>
</dbReference>
<dbReference type="PROSITE" id="PS00513">
    <property type="entry name" value="ADENYLOSUCCIN_SYN_2"/>
    <property type="match status" value="1"/>
</dbReference>
<reference key="1">
    <citation type="journal article" date="2007" name="DNA Res.">
        <title>Complete genomic structure of the bloom-forming toxic cyanobacterium Microcystis aeruginosa NIES-843.</title>
        <authorList>
            <person name="Kaneko T."/>
            <person name="Nakajima N."/>
            <person name="Okamoto S."/>
            <person name="Suzuki I."/>
            <person name="Tanabe Y."/>
            <person name="Tamaoki M."/>
            <person name="Nakamura Y."/>
            <person name="Kasai F."/>
            <person name="Watanabe A."/>
            <person name="Kawashima K."/>
            <person name="Kishida Y."/>
            <person name="Ono A."/>
            <person name="Shimizu Y."/>
            <person name="Takahashi C."/>
            <person name="Minami C."/>
            <person name="Fujishiro T."/>
            <person name="Kohara M."/>
            <person name="Katoh M."/>
            <person name="Nakazaki N."/>
            <person name="Nakayama S."/>
            <person name="Yamada M."/>
            <person name="Tabata S."/>
            <person name="Watanabe M.M."/>
        </authorList>
    </citation>
    <scope>NUCLEOTIDE SEQUENCE [LARGE SCALE GENOMIC DNA]</scope>
    <source>
        <strain>NIES-843 / IAM M-247</strain>
    </source>
</reference>